<proteinExistence type="inferred from homology"/>
<accession>Q9B506</accession>
<comment type="function">
    <text evidence="2">Component of the ubiquinol-cytochrome c reductase complex (complex III or cytochrome b-c1 complex) that is part of the mitochondrial respiratory chain. The b-c1 complex mediates electron transfer from ubiquinol to cytochrome c. Contributes to the generation of a proton gradient across the mitochondrial membrane that is then used for ATP synthesis.</text>
</comment>
<comment type="cofactor">
    <cofactor evidence="2">
        <name>heme b</name>
        <dbReference type="ChEBI" id="CHEBI:60344"/>
    </cofactor>
    <text evidence="2">Binds 2 heme b groups non-covalently.</text>
</comment>
<comment type="subunit">
    <text evidence="2">The main subunits of complex b-c1 are: cytochrome b, cytochrome c1 and the Rieske protein.</text>
</comment>
<comment type="subcellular location">
    <subcellularLocation>
        <location evidence="3">Mitochondrion inner membrane</location>
        <topology evidence="3">Multi-pass membrane protein</topology>
    </subcellularLocation>
</comment>
<comment type="miscellaneous">
    <text evidence="1">Heme 1 (or BL or b562) is low-potential and absorbs at about 562 nm, and heme 2 (or BH or b566) is high-potential and absorbs at about 566 nm.</text>
</comment>
<comment type="similarity">
    <text evidence="4 5">Belongs to the cytochrome b family.</text>
</comment>
<comment type="caution">
    <text evidence="2">The full-length protein contains only eight transmembrane helices, not nine as predicted by bioinformatics tools.</text>
</comment>
<keyword id="KW-0249">Electron transport</keyword>
<keyword id="KW-0349">Heme</keyword>
<keyword id="KW-0408">Iron</keyword>
<keyword id="KW-0472">Membrane</keyword>
<keyword id="KW-0479">Metal-binding</keyword>
<keyword id="KW-0496">Mitochondrion</keyword>
<keyword id="KW-0999">Mitochondrion inner membrane</keyword>
<keyword id="KW-0679">Respiratory chain</keyword>
<keyword id="KW-0812">Transmembrane</keyword>
<keyword id="KW-1133">Transmembrane helix</keyword>
<keyword id="KW-0813">Transport</keyword>
<keyword id="KW-0830">Ubiquinone</keyword>
<geneLocation type="mitochondrion"/>
<feature type="chain" id="PRO_0000061654" description="Cytochrome b">
    <location>
        <begin position="1"/>
        <end position="377"/>
    </location>
</feature>
<feature type="transmembrane region" description="Helical" evidence="2">
    <location>
        <begin position="33"/>
        <end position="53"/>
    </location>
</feature>
<feature type="transmembrane region" description="Helical" evidence="2">
    <location>
        <begin position="77"/>
        <end position="98"/>
    </location>
</feature>
<feature type="transmembrane region" description="Helical" evidence="2">
    <location>
        <begin position="113"/>
        <end position="133"/>
    </location>
</feature>
<feature type="transmembrane region" description="Helical" evidence="2">
    <location>
        <begin position="178"/>
        <end position="198"/>
    </location>
</feature>
<feature type="transmembrane region" description="Helical" evidence="2">
    <location>
        <begin position="226"/>
        <end position="246"/>
    </location>
</feature>
<feature type="transmembrane region" description="Helical" evidence="2">
    <location>
        <begin position="288"/>
        <end position="308"/>
    </location>
</feature>
<feature type="transmembrane region" description="Helical" evidence="2">
    <location>
        <begin position="320"/>
        <end position="340"/>
    </location>
</feature>
<feature type="transmembrane region" description="Helical" evidence="2">
    <location>
        <begin position="347"/>
        <end position="367"/>
    </location>
</feature>
<feature type="binding site" description="axial binding residue" evidence="2">
    <location>
        <position position="83"/>
    </location>
    <ligand>
        <name>heme b</name>
        <dbReference type="ChEBI" id="CHEBI:60344"/>
        <label>b562</label>
    </ligand>
    <ligandPart>
        <name>Fe</name>
        <dbReference type="ChEBI" id="CHEBI:18248"/>
    </ligandPart>
</feature>
<feature type="binding site" description="axial binding residue" evidence="2">
    <location>
        <position position="97"/>
    </location>
    <ligand>
        <name>heme b</name>
        <dbReference type="ChEBI" id="CHEBI:60344"/>
        <label>b566</label>
    </ligand>
    <ligandPart>
        <name>Fe</name>
        <dbReference type="ChEBI" id="CHEBI:18248"/>
    </ligandPart>
</feature>
<feature type="binding site" description="axial binding residue" evidence="2">
    <location>
        <position position="182"/>
    </location>
    <ligand>
        <name>heme b</name>
        <dbReference type="ChEBI" id="CHEBI:60344"/>
        <label>b562</label>
    </ligand>
    <ligandPart>
        <name>Fe</name>
        <dbReference type="ChEBI" id="CHEBI:18248"/>
    </ligandPart>
</feature>
<feature type="binding site" description="axial binding residue" evidence="2">
    <location>
        <position position="196"/>
    </location>
    <ligand>
        <name>heme b</name>
        <dbReference type="ChEBI" id="CHEBI:60344"/>
        <label>b566</label>
    </ligand>
    <ligandPart>
        <name>Fe</name>
        <dbReference type="ChEBI" id="CHEBI:18248"/>
    </ligandPart>
</feature>
<feature type="binding site" evidence="2">
    <location>
        <position position="201"/>
    </location>
    <ligand>
        <name>a ubiquinone</name>
        <dbReference type="ChEBI" id="CHEBI:16389"/>
    </ligand>
</feature>
<gene>
    <name type="primary">MT-CYB</name>
    <name type="synonym">COB</name>
    <name type="synonym">CYTB</name>
    <name type="synonym">MTCYB</name>
</gene>
<protein>
    <recommendedName>
        <fullName>Cytochrome b</fullName>
    </recommendedName>
    <alternativeName>
        <fullName>Complex III subunit 3</fullName>
    </alternativeName>
    <alternativeName>
        <fullName>Complex III subunit III</fullName>
    </alternativeName>
    <alternativeName>
        <fullName>Cytochrome b-c1 complex subunit 3</fullName>
    </alternativeName>
    <alternativeName>
        <fullName>Ubiquinol-cytochrome-c reductase complex cytochrome b subunit</fullName>
    </alternativeName>
</protein>
<name>CYB_TETBI</name>
<organism>
    <name type="scientific">Tetrodontophora bielanensis</name>
    <name type="common">Giant springtail</name>
    <dbReference type="NCBI Taxonomy" id="48717"/>
    <lineage>
        <taxon>Eukaryota</taxon>
        <taxon>Metazoa</taxon>
        <taxon>Ecdysozoa</taxon>
        <taxon>Arthropoda</taxon>
        <taxon>Hexapoda</taxon>
        <taxon>Collembola</taxon>
        <taxon>Poduromorpha</taxon>
        <taxon>Poduroidea</taxon>
        <taxon>Onychiuridae</taxon>
        <taxon>Tetrodontophorinae</taxon>
        <taxon>Tetrodontophora</taxon>
    </lineage>
</organism>
<evidence type="ECO:0000250" key="1"/>
<evidence type="ECO:0000250" key="2">
    <source>
        <dbReference type="UniProtKB" id="P00157"/>
    </source>
</evidence>
<evidence type="ECO:0000250" key="3">
    <source>
        <dbReference type="UniProtKB" id="P00163"/>
    </source>
</evidence>
<evidence type="ECO:0000255" key="4">
    <source>
        <dbReference type="PROSITE-ProRule" id="PRU00967"/>
    </source>
</evidence>
<evidence type="ECO:0000255" key="5">
    <source>
        <dbReference type="PROSITE-ProRule" id="PRU00968"/>
    </source>
</evidence>
<dbReference type="EMBL" id="AF272824">
    <property type="protein sequence ID" value="AAK30951.1"/>
    <property type="molecule type" value="Genomic_DNA"/>
</dbReference>
<dbReference type="RefSeq" id="NP_112432.1">
    <property type="nucleotide sequence ID" value="NC_002735.1"/>
</dbReference>
<dbReference type="SMR" id="Q9B506"/>
<dbReference type="GeneID" id="802999"/>
<dbReference type="CTD" id="4519"/>
<dbReference type="GO" id="GO:0005743">
    <property type="term" value="C:mitochondrial inner membrane"/>
    <property type="evidence" value="ECO:0007669"/>
    <property type="project" value="UniProtKB-SubCell"/>
</dbReference>
<dbReference type="GO" id="GO:0045275">
    <property type="term" value="C:respiratory chain complex III"/>
    <property type="evidence" value="ECO:0007669"/>
    <property type="project" value="InterPro"/>
</dbReference>
<dbReference type="GO" id="GO:0046872">
    <property type="term" value="F:metal ion binding"/>
    <property type="evidence" value="ECO:0007669"/>
    <property type="project" value="UniProtKB-KW"/>
</dbReference>
<dbReference type="GO" id="GO:0008121">
    <property type="term" value="F:ubiquinol-cytochrome-c reductase activity"/>
    <property type="evidence" value="ECO:0007669"/>
    <property type="project" value="InterPro"/>
</dbReference>
<dbReference type="GO" id="GO:0006122">
    <property type="term" value="P:mitochondrial electron transport, ubiquinol to cytochrome c"/>
    <property type="evidence" value="ECO:0007669"/>
    <property type="project" value="TreeGrafter"/>
</dbReference>
<dbReference type="CDD" id="cd00290">
    <property type="entry name" value="cytochrome_b_C"/>
    <property type="match status" value="1"/>
</dbReference>
<dbReference type="CDD" id="cd00284">
    <property type="entry name" value="Cytochrome_b_N"/>
    <property type="match status" value="1"/>
</dbReference>
<dbReference type="FunFam" id="1.20.810.10:FF:000002">
    <property type="entry name" value="Cytochrome b"/>
    <property type="match status" value="1"/>
</dbReference>
<dbReference type="Gene3D" id="1.20.810.10">
    <property type="entry name" value="Cytochrome Bc1 Complex, Chain C"/>
    <property type="match status" value="1"/>
</dbReference>
<dbReference type="InterPro" id="IPR005798">
    <property type="entry name" value="Cyt_b/b6_C"/>
</dbReference>
<dbReference type="InterPro" id="IPR036150">
    <property type="entry name" value="Cyt_b/b6_C_sf"/>
</dbReference>
<dbReference type="InterPro" id="IPR005797">
    <property type="entry name" value="Cyt_b/b6_N"/>
</dbReference>
<dbReference type="InterPro" id="IPR027387">
    <property type="entry name" value="Cytb/b6-like_sf"/>
</dbReference>
<dbReference type="InterPro" id="IPR030689">
    <property type="entry name" value="Cytochrome_b"/>
</dbReference>
<dbReference type="InterPro" id="IPR048260">
    <property type="entry name" value="Cytochrome_b_C_euk/bac"/>
</dbReference>
<dbReference type="InterPro" id="IPR048259">
    <property type="entry name" value="Cytochrome_b_N_euk/bac"/>
</dbReference>
<dbReference type="InterPro" id="IPR016174">
    <property type="entry name" value="Di-haem_cyt_TM"/>
</dbReference>
<dbReference type="PANTHER" id="PTHR19271">
    <property type="entry name" value="CYTOCHROME B"/>
    <property type="match status" value="1"/>
</dbReference>
<dbReference type="PANTHER" id="PTHR19271:SF16">
    <property type="entry name" value="CYTOCHROME B"/>
    <property type="match status" value="1"/>
</dbReference>
<dbReference type="Pfam" id="PF00032">
    <property type="entry name" value="Cytochrom_B_C"/>
    <property type="match status" value="1"/>
</dbReference>
<dbReference type="Pfam" id="PF00033">
    <property type="entry name" value="Cytochrome_B"/>
    <property type="match status" value="1"/>
</dbReference>
<dbReference type="PIRSF" id="PIRSF038885">
    <property type="entry name" value="COB"/>
    <property type="match status" value="1"/>
</dbReference>
<dbReference type="SUPFAM" id="SSF81648">
    <property type="entry name" value="a domain/subunit of cytochrome bc1 complex (Ubiquinol-cytochrome c reductase)"/>
    <property type="match status" value="1"/>
</dbReference>
<dbReference type="SUPFAM" id="SSF81342">
    <property type="entry name" value="Transmembrane di-heme cytochromes"/>
    <property type="match status" value="1"/>
</dbReference>
<dbReference type="PROSITE" id="PS51003">
    <property type="entry name" value="CYTB_CTER"/>
    <property type="match status" value="1"/>
</dbReference>
<dbReference type="PROSITE" id="PS51002">
    <property type="entry name" value="CYTB_NTER"/>
    <property type="match status" value="1"/>
</dbReference>
<reference key="1">
    <citation type="journal article" date="2001" name="Mol. Biol. Evol.">
        <title>The complete mitochondrial DNA sequence of the basal hexapod Tetrodontophora bielanensis: evidence for heteroplasmy and tRNA translocations.</title>
        <authorList>
            <person name="Nardi F."/>
            <person name="Carapelli A."/>
            <person name="Fanciulli P.P."/>
            <person name="Dallai R."/>
            <person name="Frati F."/>
        </authorList>
    </citation>
    <scope>NUCLEOTIDE SEQUENCE [GENOMIC DNA]</scope>
</reference>
<sequence length="377" mass="42882">MMTIRNSHPLIKIVNNSLVDLPAPINISTWWNFGSLLGLCLITQIMTGLFLAMHYTSDIASAFNSIVHIMRDVNNGWLIRIIHANGASLFFICLYLHTGRNIYYNSFNQISTWTMGVILMFLVMGTAFMGYVLPWGQMSFWGATVITNLLSAIPYLGNFLVQWVWGGFAVSNPTLTRFFMIHFLLPFLIIGGLLVHLLFLHQTGSNNPLGLNSNQDKIPFHPLFSYKDLVGVLIIMSGLLLLSLLSPFLLGDAENFYPANPLVTPVHIQPEWYFLFAYAILRSIPNKLGGVIALVLSVSILFILPLSSKFKMQGNQFYPFNQIMFWVFINLVIMLTWIGARPVEEPFIIMGQTLTCSYFMYFILNPMISYLWDYNLN</sequence>